<gene>
    <name type="primary">STX5</name>
    <name type="synonym">STX5A</name>
</gene>
<organism>
    <name type="scientific">Homo sapiens</name>
    <name type="common">Human</name>
    <dbReference type="NCBI Taxonomy" id="9606"/>
    <lineage>
        <taxon>Eukaryota</taxon>
        <taxon>Metazoa</taxon>
        <taxon>Chordata</taxon>
        <taxon>Craniata</taxon>
        <taxon>Vertebrata</taxon>
        <taxon>Euteleostomi</taxon>
        <taxon>Mammalia</taxon>
        <taxon>Eutheria</taxon>
        <taxon>Euarchontoglires</taxon>
        <taxon>Primates</taxon>
        <taxon>Haplorrhini</taxon>
        <taxon>Catarrhini</taxon>
        <taxon>Hominidae</taxon>
        <taxon>Homo</taxon>
    </lineage>
</organism>
<accession>Q13190</accession>
<accession>B2R8T2</accession>
<accession>F8W8Q9</accession>
<accession>Q5U0D4</accession>
<accession>Q7Z3T6</accession>
<accession>Q9BUG1</accession>
<reference key="1">
    <citation type="journal article" date="1997" name="J. Mol. Neurosci.">
        <title>Cloning and identification of human syntaxin 5 as a synaptobrevin/VAMP binding protein.</title>
        <authorList>
            <person name="Ravichandran V."/>
            <person name="Roche P.A."/>
        </authorList>
    </citation>
    <scope>NUCLEOTIDE SEQUENCE [MRNA] (ISOFORM 2)</scope>
    <source>
        <tissue>B-cell</tissue>
    </source>
</reference>
<reference key="2">
    <citation type="journal article" date="2007" name="BMC Genomics">
        <title>The full-ORF clone resource of the German cDNA consortium.</title>
        <authorList>
            <person name="Bechtel S."/>
            <person name="Rosenfelder H."/>
            <person name="Duda A."/>
            <person name="Schmidt C.P."/>
            <person name="Ernst U."/>
            <person name="Wellenreuther R."/>
            <person name="Mehrle A."/>
            <person name="Schuster C."/>
            <person name="Bahr A."/>
            <person name="Bloecker H."/>
            <person name="Heubner D."/>
            <person name="Hoerlein A."/>
            <person name="Michel G."/>
            <person name="Wedler H."/>
            <person name="Koehrer K."/>
            <person name="Ottenwaelder B."/>
            <person name="Poustka A."/>
            <person name="Wiemann S."/>
            <person name="Schupp I."/>
        </authorList>
    </citation>
    <scope>NUCLEOTIDE SEQUENCE [LARGE SCALE MRNA] (ISOFORM 1)</scope>
    <source>
        <tissue>Heart</tissue>
    </source>
</reference>
<reference key="3">
    <citation type="journal article" date="2004" name="Nat. Genet.">
        <title>Complete sequencing and characterization of 21,243 full-length human cDNAs.</title>
        <authorList>
            <person name="Ota T."/>
            <person name="Suzuki Y."/>
            <person name="Nishikawa T."/>
            <person name="Otsuki T."/>
            <person name="Sugiyama T."/>
            <person name="Irie R."/>
            <person name="Wakamatsu A."/>
            <person name="Hayashi K."/>
            <person name="Sato H."/>
            <person name="Nagai K."/>
            <person name="Kimura K."/>
            <person name="Makita H."/>
            <person name="Sekine M."/>
            <person name="Obayashi M."/>
            <person name="Nishi T."/>
            <person name="Shibahara T."/>
            <person name="Tanaka T."/>
            <person name="Ishii S."/>
            <person name="Yamamoto J."/>
            <person name="Saito K."/>
            <person name="Kawai Y."/>
            <person name="Isono Y."/>
            <person name="Nakamura Y."/>
            <person name="Nagahari K."/>
            <person name="Murakami K."/>
            <person name="Yasuda T."/>
            <person name="Iwayanagi T."/>
            <person name="Wagatsuma M."/>
            <person name="Shiratori A."/>
            <person name="Sudo H."/>
            <person name="Hosoiri T."/>
            <person name="Kaku Y."/>
            <person name="Kodaira H."/>
            <person name="Kondo H."/>
            <person name="Sugawara M."/>
            <person name="Takahashi M."/>
            <person name="Kanda K."/>
            <person name="Yokoi T."/>
            <person name="Furuya T."/>
            <person name="Kikkawa E."/>
            <person name="Omura Y."/>
            <person name="Abe K."/>
            <person name="Kamihara K."/>
            <person name="Katsuta N."/>
            <person name="Sato K."/>
            <person name="Tanikawa M."/>
            <person name="Yamazaki M."/>
            <person name="Ninomiya K."/>
            <person name="Ishibashi T."/>
            <person name="Yamashita H."/>
            <person name="Murakawa K."/>
            <person name="Fujimori K."/>
            <person name="Tanai H."/>
            <person name="Kimata M."/>
            <person name="Watanabe M."/>
            <person name="Hiraoka S."/>
            <person name="Chiba Y."/>
            <person name="Ishida S."/>
            <person name="Ono Y."/>
            <person name="Takiguchi S."/>
            <person name="Watanabe S."/>
            <person name="Yosida M."/>
            <person name="Hotuta T."/>
            <person name="Kusano J."/>
            <person name="Kanehori K."/>
            <person name="Takahashi-Fujii A."/>
            <person name="Hara H."/>
            <person name="Tanase T.-O."/>
            <person name="Nomura Y."/>
            <person name="Togiya S."/>
            <person name="Komai F."/>
            <person name="Hara R."/>
            <person name="Takeuchi K."/>
            <person name="Arita M."/>
            <person name="Imose N."/>
            <person name="Musashino K."/>
            <person name="Yuuki H."/>
            <person name="Oshima A."/>
            <person name="Sasaki N."/>
            <person name="Aotsuka S."/>
            <person name="Yoshikawa Y."/>
            <person name="Matsunawa H."/>
            <person name="Ichihara T."/>
            <person name="Shiohata N."/>
            <person name="Sano S."/>
            <person name="Moriya S."/>
            <person name="Momiyama H."/>
            <person name="Satoh N."/>
            <person name="Takami S."/>
            <person name="Terashima Y."/>
            <person name="Suzuki O."/>
            <person name="Nakagawa S."/>
            <person name="Senoh A."/>
            <person name="Mizoguchi H."/>
            <person name="Goto Y."/>
            <person name="Shimizu F."/>
            <person name="Wakebe H."/>
            <person name="Hishigaki H."/>
            <person name="Watanabe T."/>
            <person name="Sugiyama A."/>
            <person name="Takemoto M."/>
            <person name="Kawakami B."/>
            <person name="Yamazaki M."/>
            <person name="Watanabe K."/>
            <person name="Kumagai A."/>
            <person name="Itakura S."/>
            <person name="Fukuzumi Y."/>
            <person name="Fujimori Y."/>
            <person name="Komiyama M."/>
            <person name="Tashiro H."/>
            <person name="Tanigami A."/>
            <person name="Fujiwara T."/>
            <person name="Ono T."/>
            <person name="Yamada K."/>
            <person name="Fujii Y."/>
            <person name="Ozaki K."/>
            <person name="Hirao M."/>
            <person name="Ohmori Y."/>
            <person name="Kawabata A."/>
            <person name="Hikiji T."/>
            <person name="Kobatake N."/>
            <person name="Inagaki H."/>
            <person name="Ikema Y."/>
            <person name="Okamoto S."/>
            <person name="Okitani R."/>
            <person name="Kawakami T."/>
            <person name="Noguchi S."/>
            <person name="Itoh T."/>
            <person name="Shigeta K."/>
            <person name="Senba T."/>
            <person name="Matsumura K."/>
            <person name="Nakajima Y."/>
            <person name="Mizuno T."/>
            <person name="Morinaga M."/>
            <person name="Sasaki M."/>
            <person name="Togashi T."/>
            <person name="Oyama M."/>
            <person name="Hata H."/>
            <person name="Watanabe M."/>
            <person name="Komatsu T."/>
            <person name="Mizushima-Sugano J."/>
            <person name="Satoh T."/>
            <person name="Shirai Y."/>
            <person name="Takahashi Y."/>
            <person name="Nakagawa K."/>
            <person name="Okumura K."/>
            <person name="Nagase T."/>
            <person name="Nomura N."/>
            <person name="Kikuchi H."/>
            <person name="Masuho Y."/>
            <person name="Yamashita R."/>
            <person name="Nakai K."/>
            <person name="Yada T."/>
            <person name="Nakamura Y."/>
            <person name="Ohara O."/>
            <person name="Isogai T."/>
            <person name="Sugano S."/>
        </authorList>
    </citation>
    <scope>NUCLEOTIDE SEQUENCE [LARGE SCALE MRNA] (ISOFORM 2)</scope>
    <source>
        <tissue>Umbilical cord blood</tissue>
    </source>
</reference>
<reference key="4">
    <citation type="submission" date="2004-10" db="EMBL/GenBank/DDBJ databases">
        <title>Cloning of human full-length CDSs in BD Creator(TM) system donor vector.</title>
        <authorList>
            <person name="Kalnine N."/>
            <person name="Chen X."/>
            <person name="Rolfs A."/>
            <person name="Halleck A."/>
            <person name="Hines L."/>
            <person name="Eisenstein S."/>
            <person name="Koundinya M."/>
            <person name="Raphael J."/>
            <person name="Moreira D."/>
            <person name="Kelley T."/>
            <person name="LaBaer J."/>
            <person name="Lin Y."/>
            <person name="Phelan M."/>
            <person name="Farmer A."/>
        </authorList>
    </citation>
    <scope>NUCLEOTIDE SEQUENCE [LARGE SCALE MRNA] (ISOFORM 2)</scope>
</reference>
<reference key="5">
    <citation type="journal article" date="2006" name="Nature">
        <title>Human chromosome 11 DNA sequence and analysis including novel gene identification.</title>
        <authorList>
            <person name="Taylor T.D."/>
            <person name="Noguchi H."/>
            <person name="Totoki Y."/>
            <person name="Toyoda A."/>
            <person name="Kuroki Y."/>
            <person name="Dewar K."/>
            <person name="Lloyd C."/>
            <person name="Itoh T."/>
            <person name="Takeda T."/>
            <person name="Kim D.-W."/>
            <person name="She X."/>
            <person name="Barlow K.F."/>
            <person name="Bloom T."/>
            <person name="Bruford E."/>
            <person name="Chang J.L."/>
            <person name="Cuomo C.A."/>
            <person name="Eichler E."/>
            <person name="FitzGerald M.G."/>
            <person name="Jaffe D.B."/>
            <person name="LaButti K."/>
            <person name="Nicol R."/>
            <person name="Park H.-S."/>
            <person name="Seaman C."/>
            <person name="Sougnez C."/>
            <person name="Yang X."/>
            <person name="Zimmer A.R."/>
            <person name="Zody M.C."/>
            <person name="Birren B.W."/>
            <person name="Nusbaum C."/>
            <person name="Fujiyama A."/>
            <person name="Hattori M."/>
            <person name="Rogers J."/>
            <person name="Lander E.S."/>
            <person name="Sakaki Y."/>
        </authorList>
    </citation>
    <scope>NUCLEOTIDE SEQUENCE [LARGE SCALE GENOMIC DNA]</scope>
</reference>
<reference key="6">
    <citation type="journal article" date="2004" name="Genome Res.">
        <title>The status, quality, and expansion of the NIH full-length cDNA project: the Mammalian Gene Collection (MGC).</title>
        <authorList>
            <consortium name="The MGC Project Team"/>
        </authorList>
    </citation>
    <scope>NUCLEOTIDE SEQUENCE [LARGE SCALE MRNA] (ISOFORMS 1 AND 3)</scope>
    <source>
        <tissue>Kidney</tissue>
        <tissue>Uterus</tissue>
    </source>
</reference>
<reference key="7">
    <citation type="journal article" date="2008" name="Proc. Natl. Acad. Sci. U.S.A.">
        <title>A quantitative atlas of mitotic phosphorylation.</title>
        <authorList>
            <person name="Dephoure N."/>
            <person name="Zhou C."/>
            <person name="Villen J."/>
            <person name="Beausoleil S.A."/>
            <person name="Bakalarski C.E."/>
            <person name="Elledge S.J."/>
            <person name="Gygi S.P."/>
        </authorList>
    </citation>
    <scope>IDENTIFICATION BY MASS SPECTROMETRY [LARGE SCALE ANALYSIS]</scope>
    <source>
        <tissue>Cervix carcinoma</tissue>
    </source>
</reference>
<reference key="8">
    <citation type="journal article" date="2009" name="EMBO J.">
        <title>Direct interaction between the COG complex and the SM protein, Sly1, is required for Golgi SNARE pairing.</title>
        <authorList>
            <person name="Laufman O."/>
            <person name="Kedan A."/>
            <person name="Hong W."/>
            <person name="Lev S."/>
        </authorList>
    </citation>
    <scope>INTERACTION WITH COG4</scope>
</reference>
<reference key="9">
    <citation type="journal article" date="2011" name="BMC Syst. Biol.">
        <title>Initial characterization of the human central proteome.</title>
        <authorList>
            <person name="Burkard T.R."/>
            <person name="Planyavsky M."/>
            <person name="Kaupe I."/>
            <person name="Breitwieser F.P."/>
            <person name="Buerckstuemmer T."/>
            <person name="Bennett K.L."/>
            <person name="Superti-Furga G."/>
            <person name="Colinge J."/>
        </authorList>
    </citation>
    <scope>IDENTIFICATION BY MASS SPECTROMETRY [LARGE SCALE ANALYSIS]</scope>
</reference>
<reference key="10">
    <citation type="journal article" date="2013" name="Exp. Cell Res.">
        <title>Stx5 is a novel interactor of VLDL-R to affect its intracellular trafficking and processing.</title>
        <authorList>
            <person name="Wagner T."/>
            <person name="Dieckmann M."/>
            <person name="Jaeger S."/>
            <person name="Weggen S."/>
            <person name="Pietrzik C.U."/>
        </authorList>
    </citation>
    <scope>INTERACTION WITH VLDLR</scope>
    <scope>SUBCELLULAR LOCATION</scope>
</reference>
<reference key="11">
    <citation type="journal article" date="2014" name="J. Proteomics">
        <title>An enzyme assisted RP-RPLC approach for in-depth analysis of human liver phosphoproteome.</title>
        <authorList>
            <person name="Bian Y."/>
            <person name="Song C."/>
            <person name="Cheng K."/>
            <person name="Dong M."/>
            <person name="Wang F."/>
            <person name="Huang J."/>
            <person name="Sun D."/>
            <person name="Wang L."/>
            <person name="Ye M."/>
            <person name="Zou H."/>
        </authorList>
    </citation>
    <scope>IDENTIFICATION BY MASS SPECTROMETRY [LARGE SCALE ANALYSIS]</scope>
    <source>
        <tissue>Liver</tissue>
    </source>
</reference>
<reference key="12">
    <citation type="journal article" date="2015" name="Proteomics">
        <title>N-terminome analysis of the human mitochondrial proteome.</title>
        <authorList>
            <person name="Vaca Jacome A.S."/>
            <person name="Rabilloud T."/>
            <person name="Schaeffer-Reiss C."/>
            <person name="Rompais M."/>
            <person name="Ayoub D."/>
            <person name="Lane L."/>
            <person name="Bairoch A."/>
            <person name="Van Dorsselaer A."/>
            <person name="Carapito C."/>
        </authorList>
    </citation>
    <scope>IDENTIFICATION BY MASS SPECTROMETRY [LARGE SCALE ANALYSIS]</scope>
</reference>
<reference key="13">
    <citation type="journal article" date="2017" name="J. Virol.">
        <title>Potent Inhibition of Human Cytomegalovirus by Modulation of Cellular SNARE Syntaxin 5.</title>
        <authorList>
            <person name="Cruz L."/>
            <person name="Streck N.T."/>
            <person name="Ferguson K."/>
            <person name="Desai T."/>
            <person name="Desai D.H."/>
            <person name="Amin S.G."/>
            <person name="Buchkovich N.J."/>
        </authorList>
    </citation>
    <scope>FUNCTION (MICROBIAL INFECTION)</scope>
    <scope>INDUCTION BY HUMAN CYTOMEGALOVIRUS</scope>
    <scope>SUBCELLULAR LOCATION</scope>
</reference>
<reference key="14">
    <citation type="journal article" date="2021" name="EMBO Mol. Med.">
        <title>BET1 variants establish impaired vesicular transport as a cause for muscular dystrophy with epilepsy.</title>
        <authorList>
            <person name="Donkervoort S."/>
            <person name="Krause N."/>
            <person name="Dergai M."/>
            <person name="Yun P."/>
            <person name="Koliwer J."/>
            <person name="Gorokhova S."/>
            <person name="Geist Hauserman J."/>
            <person name="Cummings B.B."/>
            <person name="Hu Y."/>
            <person name="Smith R."/>
            <person name="Uapinyoying P."/>
            <person name="Ganesh V.S."/>
            <person name="Ghosh P.S."/>
            <person name="Monaghan K.G."/>
            <person name="Edassery S.L."/>
            <person name="Ferle P.E."/>
            <person name="Silverstein S."/>
            <person name="Chao K.R."/>
            <person name="Snyder M."/>
            <person name="Ellingwood S."/>
            <person name="Bharucha-Goebel D."/>
            <person name="Iannaccone S.T."/>
            <person name="Dal Peraro M."/>
            <person name="Foley A.R."/>
            <person name="Savas J.N."/>
            <person name="Bolduc V."/>
            <person name="Fasshauer D."/>
            <person name="Boennemann C.G."/>
            <person name="Schwake M."/>
        </authorList>
    </citation>
    <scope>INTERACTION WITH BET1</scope>
</reference>
<reference evidence="19" key="15">
    <citation type="journal article" date="2008" name="EMBO J.">
        <title>Structural basis of cargo membrane protein discrimination by the human COPII coat machinery.</title>
        <authorList>
            <person name="Mancias J.D."/>
            <person name="Goldberg J."/>
        </authorList>
    </citation>
    <scope>X-RAY CRYSTALLOGRAPHY (2.70 ANGSTROMS) OF 242-248 IN COMPLEX WITH SEC23A AND SEC24D</scope>
    <scope>INTERACTION WITH SEC24C AND SEC24D</scope>
    <scope>MOTIF</scope>
    <scope>MUTAGENESIS OF ILE-245 AND MET-247</scope>
</reference>
<reference key="16">
    <citation type="journal article" date="2006" name="Science">
        <title>The consensus coding sequences of human breast and colorectal cancers.</title>
        <authorList>
            <person name="Sjoeblom T."/>
            <person name="Jones S."/>
            <person name="Wood L.D."/>
            <person name="Parsons D.W."/>
            <person name="Lin J."/>
            <person name="Barber T.D."/>
            <person name="Mandelker D."/>
            <person name="Leary R.J."/>
            <person name="Ptak J."/>
            <person name="Silliman N."/>
            <person name="Szabo S."/>
            <person name="Buckhaults P."/>
            <person name="Farrell C."/>
            <person name="Meeh P."/>
            <person name="Markowitz S.D."/>
            <person name="Willis J."/>
            <person name="Dawson D."/>
            <person name="Willson J.K.V."/>
            <person name="Gazdar A.F."/>
            <person name="Hartigan J."/>
            <person name="Wu L."/>
            <person name="Liu C."/>
            <person name="Parmigiani G."/>
            <person name="Park B.H."/>
            <person name="Bachman K.E."/>
            <person name="Papadopoulos N."/>
            <person name="Vogelstein B."/>
            <person name="Kinzler K.W."/>
            <person name="Velculescu V.E."/>
        </authorList>
    </citation>
    <scope>VARIANT [LARGE SCALE ANALYSIS] HIS-79</scope>
</reference>
<reference key="17">
    <citation type="journal article" date="2019" name="Mol. Psychiatry">
        <title>A set of regulatory genes co-expressed in embryonic human brain is implicated in disrupted speech development.</title>
        <authorList>
            <person name="Eising E."/>
            <person name="Carrion-Castillo A."/>
            <person name="Vino A."/>
            <person name="Strand E.A."/>
            <person name="Jakielski K.J."/>
            <person name="Scerri T.S."/>
            <person name="Hildebrand M.S."/>
            <person name="Webster R."/>
            <person name="Ma A."/>
            <person name="Mazoyer B."/>
            <person name="Francks C."/>
            <person name="Bahlo M."/>
            <person name="Scheffer I.E."/>
            <person name="Morgan A.T."/>
            <person name="Shriberg L.D."/>
            <person name="Fisher S.E."/>
        </authorList>
    </citation>
    <scope>VARIANT VAL-138</scope>
</reference>
<reference key="18">
    <citation type="journal article" date="2021" name="Nat. Commun.">
        <title>Congenital disorder of glycosylation caused by starting site-specific variant in syntaxin-5.</title>
        <authorList>
            <person name="Linders P.T.A."/>
            <person name="Gerretsen E.C.F."/>
            <person name="Ashikov A."/>
            <person name="Vals M.A."/>
            <person name="de Boer R."/>
            <person name="Revelo N.H."/>
            <person name="Arts R."/>
            <person name="Baerenfaenger M."/>
            <person name="Zijlstra F."/>
            <person name="Huijben K."/>
            <person name="Raymond K."/>
            <person name="Muru K."/>
            <person name="Fjodorova O."/>
            <person name="Pajusalu S."/>
            <person name="Ounap K."/>
            <person name="Ter Beest M."/>
            <person name="Lefeber D."/>
            <person name="van den Bogaart G."/>
        </authorList>
    </citation>
    <scope>VARIANT CDG2AA VAL-55</scope>
    <scope>INVOLVEMENT IN CDG2AA</scope>
    <scope>FUNCTION</scope>
    <scope>INTERACTION WITH BET1L</scope>
</reference>
<dbReference type="EMBL" id="U26648">
    <property type="protein sequence ID" value="AAC71078.1"/>
    <property type="molecule type" value="mRNA"/>
</dbReference>
<dbReference type="EMBL" id="BX537426">
    <property type="protein sequence ID" value="CAD97668.1"/>
    <property type="molecule type" value="mRNA"/>
</dbReference>
<dbReference type="EMBL" id="AK313497">
    <property type="protein sequence ID" value="BAG36279.1"/>
    <property type="molecule type" value="mRNA"/>
</dbReference>
<dbReference type="EMBL" id="BT019646">
    <property type="protein sequence ID" value="AAV38452.1"/>
    <property type="molecule type" value="mRNA"/>
</dbReference>
<dbReference type="EMBL" id="BT019647">
    <property type="protein sequence ID" value="AAV38453.1"/>
    <property type="molecule type" value="mRNA"/>
</dbReference>
<dbReference type="EMBL" id="AP001160">
    <property type="status" value="NOT_ANNOTATED_CDS"/>
    <property type="molecule type" value="Genomic_DNA"/>
</dbReference>
<dbReference type="EMBL" id="BC002645">
    <property type="protein sequence ID" value="AAH02645.1"/>
    <property type="molecule type" value="mRNA"/>
</dbReference>
<dbReference type="EMBL" id="BC012137">
    <property type="protein sequence ID" value="AAH12137.2"/>
    <property type="molecule type" value="mRNA"/>
</dbReference>
<dbReference type="CCDS" id="CCDS58140.1">
    <molecule id="Q13190-4"/>
</dbReference>
<dbReference type="CCDS" id="CCDS8038.2">
    <molecule id="Q13190-1"/>
</dbReference>
<dbReference type="CCDS" id="CCDS81578.1">
    <molecule id="Q13190-2"/>
</dbReference>
<dbReference type="PIR" id="G01817">
    <property type="entry name" value="G01817"/>
</dbReference>
<dbReference type="RefSeq" id="NP_001231595.1">
    <molecule id="Q13190-4"/>
    <property type="nucleotide sequence ID" value="NM_001244666.3"/>
</dbReference>
<dbReference type="RefSeq" id="NP_001317223.1">
    <molecule id="Q13190-2"/>
    <property type="nucleotide sequence ID" value="NM_001330294.2"/>
</dbReference>
<dbReference type="RefSeq" id="NP_003155.2">
    <molecule id="Q13190-1"/>
    <property type="nucleotide sequence ID" value="NM_003164.5"/>
</dbReference>
<dbReference type="RefSeq" id="XP_047283461.1">
    <molecule id="Q13190-1"/>
    <property type="nucleotide sequence ID" value="XM_047427505.1"/>
</dbReference>
<dbReference type="RefSeq" id="XP_054225743.1">
    <molecule id="Q13190-1"/>
    <property type="nucleotide sequence ID" value="XM_054369768.1"/>
</dbReference>
<dbReference type="PDB" id="3EFO">
    <property type="method" value="X-ray"/>
    <property type="resolution" value="2.70 A"/>
    <property type="chains" value="C=242-248"/>
</dbReference>
<dbReference type="PDBsum" id="3EFO"/>
<dbReference type="SMR" id="Q13190"/>
<dbReference type="BioGRID" id="112680">
    <property type="interactions" value="281"/>
</dbReference>
<dbReference type="DIP" id="DIP-56987N"/>
<dbReference type="FunCoup" id="Q13190">
    <property type="interactions" value="3077"/>
</dbReference>
<dbReference type="IntAct" id="Q13190">
    <property type="interactions" value="140"/>
</dbReference>
<dbReference type="MINT" id="Q13190"/>
<dbReference type="STRING" id="9606.ENSP00000294179"/>
<dbReference type="TCDB" id="8.A.91.1.9">
    <property type="family name" value="the syntaxin (syntaxin) family"/>
</dbReference>
<dbReference type="GlyGen" id="Q13190">
    <property type="glycosylation" value="1 site, 1 O-linked glycan (1 site)"/>
</dbReference>
<dbReference type="iPTMnet" id="Q13190"/>
<dbReference type="MetOSite" id="Q13190"/>
<dbReference type="PhosphoSitePlus" id="Q13190"/>
<dbReference type="SwissPalm" id="Q13190"/>
<dbReference type="BioMuta" id="STX5"/>
<dbReference type="DMDM" id="114152881"/>
<dbReference type="jPOST" id="Q13190"/>
<dbReference type="MassIVE" id="Q13190"/>
<dbReference type="PaxDb" id="9606-ENSP00000294179"/>
<dbReference type="PeptideAtlas" id="Q13190"/>
<dbReference type="ProteomicsDB" id="30190"/>
<dbReference type="ProteomicsDB" id="59212">
    <molecule id="Q13190-1"/>
</dbReference>
<dbReference type="ProteomicsDB" id="59213">
    <molecule id="Q13190-2"/>
</dbReference>
<dbReference type="ProteomicsDB" id="59214">
    <molecule id="Q13190-3"/>
</dbReference>
<dbReference type="Pumba" id="Q13190"/>
<dbReference type="Antibodypedia" id="723">
    <property type="antibodies" value="166 antibodies from 28 providers"/>
</dbReference>
<dbReference type="DNASU" id="6811"/>
<dbReference type="Ensembl" id="ENST00000294179.8">
    <molecule id="Q13190-1"/>
    <property type="protein sequence ID" value="ENSP00000294179.3"/>
    <property type="gene ID" value="ENSG00000162236.13"/>
</dbReference>
<dbReference type="Ensembl" id="ENST00000377897.8">
    <molecule id="Q13190-4"/>
    <property type="protein sequence ID" value="ENSP00000367129.4"/>
    <property type="gene ID" value="ENSG00000162236.13"/>
</dbReference>
<dbReference type="Ensembl" id="ENST00000394690.5">
    <molecule id="Q13190-2"/>
    <property type="protein sequence ID" value="ENSP00000378182.1"/>
    <property type="gene ID" value="ENSG00000162236.13"/>
</dbReference>
<dbReference type="GeneID" id="6811"/>
<dbReference type="KEGG" id="hsa:6811"/>
<dbReference type="MANE-Select" id="ENST00000294179.8">
    <property type="protein sequence ID" value="ENSP00000294179.3"/>
    <property type="RefSeq nucleotide sequence ID" value="NM_003164.5"/>
    <property type="RefSeq protein sequence ID" value="NP_003155.2"/>
</dbReference>
<dbReference type="UCSC" id="uc001nvh.4">
    <molecule id="Q13190-1"/>
    <property type="organism name" value="human"/>
</dbReference>
<dbReference type="AGR" id="HGNC:11440"/>
<dbReference type="CTD" id="6811"/>
<dbReference type="DisGeNET" id="6811"/>
<dbReference type="GeneCards" id="STX5"/>
<dbReference type="HGNC" id="HGNC:11440">
    <property type="gene designation" value="STX5"/>
</dbReference>
<dbReference type="HPA" id="ENSG00000162236">
    <property type="expression patterns" value="Low tissue specificity"/>
</dbReference>
<dbReference type="MalaCards" id="STX5"/>
<dbReference type="MIM" id="603189">
    <property type="type" value="gene"/>
</dbReference>
<dbReference type="MIM" id="620454">
    <property type="type" value="phenotype"/>
</dbReference>
<dbReference type="neXtProt" id="NX_Q13190"/>
<dbReference type="OpenTargets" id="ENSG00000162236"/>
<dbReference type="PharmGKB" id="PA36237"/>
<dbReference type="VEuPathDB" id="HostDB:ENSG00000162236"/>
<dbReference type="eggNOG" id="KOG0812">
    <property type="taxonomic scope" value="Eukaryota"/>
</dbReference>
<dbReference type="GeneTree" id="ENSGT01000000214440"/>
<dbReference type="HOGENOM" id="CLU_044998_1_0_1"/>
<dbReference type="InParanoid" id="Q13190"/>
<dbReference type="OMA" id="EHNHNVV"/>
<dbReference type="OrthoDB" id="421009at2759"/>
<dbReference type="PAN-GO" id="Q13190">
    <property type="GO annotations" value="10 GO annotations based on evolutionary models"/>
</dbReference>
<dbReference type="PhylomeDB" id="Q13190"/>
<dbReference type="TreeFam" id="TF315068"/>
<dbReference type="PathwayCommons" id="Q13190"/>
<dbReference type="Reactome" id="R-HSA-204005">
    <property type="pathway name" value="COPII-mediated vesicle transport"/>
</dbReference>
<dbReference type="Reactome" id="R-HSA-5694530">
    <property type="pathway name" value="Cargo concentration in the ER"/>
</dbReference>
<dbReference type="Reactome" id="R-HSA-6807878">
    <property type="pathway name" value="COPI-mediated anterograde transport"/>
</dbReference>
<dbReference type="Reactome" id="R-HSA-6811438">
    <property type="pathway name" value="Intra-Golgi traffic"/>
</dbReference>
<dbReference type="Reactome" id="R-HSA-8980692">
    <property type="pathway name" value="RHOA GTPase cycle"/>
</dbReference>
<dbReference type="Reactome" id="R-HSA-9013106">
    <property type="pathway name" value="RHOC GTPase cycle"/>
</dbReference>
<dbReference type="Reactome" id="R-HSA-9013408">
    <property type="pathway name" value="RHOG GTPase cycle"/>
</dbReference>
<dbReference type="Reactome" id="R-HSA-9609523">
    <property type="pathway name" value="Insertion of tail-anchored proteins into the endoplasmic reticulum membrane"/>
</dbReference>
<dbReference type="SignaLink" id="Q13190"/>
<dbReference type="SIGNOR" id="Q13190"/>
<dbReference type="BioGRID-ORCS" id="6811">
    <property type="hits" value="475 hits in 1166 CRISPR screens"/>
</dbReference>
<dbReference type="ChiTaRS" id="STX5">
    <property type="organism name" value="human"/>
</dbReference>
<dbReference type="EvolutionaryTrace" id="Q13190"/>
<dbReference type="GeneWiki" id="STX5"/>
<dbReference type="GenomeRNAi" id="6811"/>
<dbReference type="Pharos" id="Q13190">
    <property type="development level" value="Tbio"/>
</dbReference>
<dbReference type="PRO" id="PR:Q13190"/>
<dbReference type="Proteomes" id="UP000005640">
    <property type="component" value="Chromosome 11"/>
</dbReference>
<dbReference type="RNAct" id="Q13190">
    <property type="molecule type" value="protein"/>
</dbReference>
<dbReference type="Bgee" id="ENSG00000162236">
    <property type="expression patterns" value="Expressed in bone marrow cell and 99 other cell types or tissues"/>
</dbReference>
<dbReference type="ExpressionAtlas" id="Q13190">
    <property type="expression patterns" value="baseline and differential"/>
</dbReference>
<dbReference type="GO" id="GO:0005829">
    <property type="term" value="C:cytosol"/>
    <property type="evidence" value="ECO:0000304"/>
    <property type="project" value="Reactome"/>
</dbReference>
<dbReference type="GO" id="GO:0012505">
    <property type="term" value="C:endomembrane system"/>
    <property type="evidence" value="ECO:0000318"/>
    <property type="project" value="GO_Central"/>
</dbReference>
<dbReference type="GO" id="GO:0005789">
    <property type="term" value="C:endoplasmic reticulum membrane"/>
    <property type="evidence" value="ECO:0000304"/>
    <property type="project" value="Reactome"/>
</dbReference>
<dbReference type="GO" id="GO:0033116">
    <property type="term" value="C:endoplasmic reticulum-Golgi intermediate compartment membrane"/>
    <property type="evidence" value="ECO:0000304"/>
    <property type="project" value="Reactome"/>
</dbReference>
<dbReference type="GO" id="GO:0012507">
    <property type="term" value="C:ER to Golgi transport vesicle membrane"/>
    <property type="evidence" value="ECO:0000304"/>
    <property type="project" value="Reactome"/>
</dbReference>
<dbReference type="GO" id="GO:0005794">
    <property type="term" value="C:Golgi apparatus"/>
    <property type="evidence" value="ECO:0000314"/>
    <property type="project" value="UniProtKB"/>
</dbReference>
<dbReference type="GO" id="GO:0000139">
    <property type="term" value="C:Golgi membrane"/>
    <property type="evidence" value="ECO:0000318"/>
    <property type="project" value="GO_Central"/>
</dbReference>
<dbReference type="GO" id="GO:0031201">
    <property type="term" value="C:SNARE complex"/>
    <property type="evidence" value="ECO:0000318"/>
    <property type="project" value="GO_Central"/>
</dbReference>
<dbReference type="GO" id="GO:0031982">
    <property type="term" value="C:vesicle"/>
    <property type="evidence" value="ECO:0000314"/>
    <property type="project" value="UniProtKB"/>
</dbReference>
<dbReference type="GO" id="GO:0045296">
    <property type="term" value="F:cadherin binding"/>
    <property type="evidence" value="ECO:0007005"/>
    <property type="project" value="BHF-UCL"/>
</dbReference>
<dbReference type="GO" id="GO:0005484">
    <property type="term" value="F:SNAP receptor activity"/>
    <property type="evidence" value="ECO:0000314"/>
    <property type="project" value="HGNC-UCL"/>
</dbReference>
<dbReference type="GO" id="GO:0000149">
    <property type="term" value="F:SNARE binding"/>
    <property type="evidence" value="ECO:0000318"/>
    <property type="project" value="GO_Central"/>
</dbReference>
<dbReference type="GO" id="GO:0034498">
    <property type="term" value="P:early endosome to Golgi transport"/>
    <property type="evidence" value="ECO:0000315"/>
    <property type="project" value="UniProtKB"/>
</dbReference>
<dbReference type="GO" id="GO:0006888">
    <property type="term" value="P:endoplasmic reticulum to Golgi vesicle-mediated transport"/>
    <property type="evidence" value="ECO:0000318"/>
    <property type="project" value="GO_Central"/>
</dbReference>
<dbReference type="GO" id="GO:0090166">
    <property type="term" value="P:Golgi disassembly"/>
    <property type="evidence" value="ECO:0000314"/>
    <property type="project" value="UniProtKB"/>
</dbReference>
<dbReference type="GO" id="GO:0006886">
    <property type="term" value="P:intracellular protein transport"/>
    <property type="evidence" value="ECO:0000318"/>
    <property type="project" value="GO_Central"/>
</dbReference>
<dbReference type="GO" id="GO:0045732">
    <property type="term" value="P:positive regulation of protein catabolic process"/>
    <property type="evidence" value="ECO:0000315"/>
    <property type="project" value="UniProtKB"/>
</dbReference>
<dbReference type="GO" id="GO:1903358">
    <property type="term" value="P:regulation of Golgi organization"/>
    <property type="evidence" value="ECO:0000314"/>
    <property type="project" value="UniProtKB"/>
</dbReference>
<dbReference type="GO" id="GO:0042147">
    <property type="term" value="P:retrograde transport, endosome to Golgi"/>
    <property type="evidence" value="ECO:0000314"/>
    <property type="project" value="HGNC-UCL"/>
</dbReference>
<dbReference type="GO" id="GO:0006890">
    <property type="term" value="P:retrograde vesicle-mediated transport, Golgi to endoplasmic reticulum"/>
    <property type="evidence" value="ECO:0000315"/>
    <property type="project" value="UniProtKB"/>
</dbReference>
<dbReference type="GO" id="GO:0048278">
    <property type="term" value="P:vesicle docking"/>
    <property type="evidence" value="ECO:0000318"/>
    <property type="project" value="GO_Central"/>
</dbReference>
<dbReference type="GO" id="GO:0006906">
    <property type="term" value="P:vesicle fusion"/>
    <property type="evidence" value="ECO:0000318"/>
    <property type="project" value="GO_Central"/>
</dbReference>
<dbReference type="CDD" id="cd15844">
    <property type="entry name" value="SNARE_syntaxin5"/>
    <property type="match status" value="1"/>
</dbReference>
<dbReference type="FunFam" id="1.20.5.110:FF:000187">
    <property type="entry name" value="SNARE domain containing protein"/>
    <property type="match status" value="1"/>
</dbReference>
<dbReference type="FunFam" id="1.20.58.70:FF:000005">
    <property type="entry name" value="syntaxin-5 isoform X1"/>
    <property type="match status" value="1"/>
</dbReference>
<dbReference type="Gene3D" id="1.20.58.70">
    <property type="match status" value="1"/>
</dbReference>
<dbReference type="InterPro" id="IPR010989">
    <property type="entry name" value="SNARE"/>
</dbReference>
<dbReference type="InterPro" id="IPR045242">
    <property type="entry name" value="Syntaxin"/>
</dbReference>
<dbReference type="InterPro" id="IPR021538">
    <property type="entry name" value="Syntaxin-5_N"/>
</dbReference>
<dbReference type="InterPro" id="IPR006012">
    <property type="entry name" value="Syntaxin/epimorphin_CS"/>
</dbReference>
<dbReference type="InterPro" id="IPR000727">
    <property type="entry name" value="T_SNARE_dom"/>
</dbReference>
<dbReference type="PANTHER" id="PTHR19957">
    <property type="entry name" value="SYNTAXIN"/>
    <property type="match status" value="1"/>
</dbReference>
<dbReference type="PANTHER" id="PTHR19957:SF3">
    <property type="entry name" value="SYNTAXIN-5"/>
    <property type="match status" value="1"/>
</dbReference>
<dbReference type="Pfam" id="PF05739">
    <property type="entry name" value="SNARE"/>
    <property type="match status" value="1"/>
</dbReference>
<dbReference type="Pfam" id="PF11416">
    <property type="entry name" value="Syntaxin-5_N"/>
    <property type="match status" value="1"/>
</dbReference>
<dbReference type="SMART" id="SM00397">
    <property type="entry name" value="t_SNARE"/>
    <property type="match status" value="1"/>
</dbReference>
<dbReference type="SUPFAM" id="SSF47661">
    <property type="entry name" value="t-snare proteins"/>
    <property type="match status" value="1"/>
</dbReference>
<dbReference type="PROSITE" id="PS00914">
    <property type="entry name" value="SYNTAXIN"/>
    <property type="match status" value="1"/>
</dbReference>
<dbReference type="PROSITE" id="PS50192">
    <property type="entry name" value="T_SNARE"/>
    <property type="match status" value="1"/>
</dbReference>
<sequence length="355" mass="39673">MIPRKRYGSKNTDQGVYLGLSKTQVLSPATAGSSSSDIAPLPPPVTLVPPPPDTMSCRDRTQEFLSACKSLQTRQNGIQTNKPALRAVRQRSEFTLMAKRIGKDLSNTFAKLEKLTILAKRKSLFDDKAVEIEELTYIIKQDINSLNKQIAQLQDFVRAKGSQSGRHLQTHSNTIVVSLQSKLASMSNDFKSVLEVRTENLKQQRSRREQFSRAPVSALPLAPNHLGGGAVVLGAESHASKDVAIDMMDSRTSQQLQLIDEQDSYIQSRADTMQNIESTIVELGSIFQQLAHMVKEQEETIQRIDENVLGAQLDVEAAHSEILKYFQSVTSNRWLMVKIFLILIVFFIIFVVFLA</sequence>
<keyword id="KW-0002">3D-structure</keyword>
<keyword id="KW-0024">Alternative initiation</keyword>
<keyword id="KW-0025">Alternative splicing</keyword>
<keyword id="KW-0175">Coiled coil</keyword>
<keyword id="KW-0900">Congenital disorder of glycosylation</keyword>
<keyword id="KW-0225">Disease variant</keyword>
<keyword id="KW-0333">Golgi apparatus</keyword>
<keyword id="KW-0472">Membrane</keyword>
<keyword id="KW-1267">Proteomics identification</keyword>
<keyword id="KW-1185">Reference proteome</keyword>
<keyword id="KW-0812">Transmembrane</keyword>
<keyword id="KW-1133">Transmembrane helix</keyword>
<keyword id="KW-0813">Transport</keyword>
<name>STX5_HUMAN</name>
<feature type="chain" id="PRO_0000210205" description="Syntaxin-5">
    <location>
        <begin position="1"/>
        <end position="355"/>
    </location>
</feature>
<feature type="topological domain" description="Cytoplasmic" evidence="3">
    <location>
        <begin position="1"/>
        <end position="333"/>
    </location>
</feature>
<feature type="transmembrane region" description="Helical; Anchor for type IV membrane protein" evidence="3">
    <location>
        <begin position="334"/>
        <end position="354"/>
    </location>
</feature>
<feature type="topological domain" description="Vesicular" evidence="3">
    <location>
        <position position="355"/>
    </location>
</feature>
<feature type="domain" description="t-SNARE coiled-coil homology" evidence="4">
    <location>
        <begin position="263"/>
        <end position="325"/>
    </location>
</feature>
<feature type="region of interest" description="Disordered" evidence="5">
    <location>
        <begin position="28"/>
        <end position="51"/>
    </location>
</feature>
<feature type="coiled-coil region" evidence="3">
    <location>
        <begin position="287"/>
        <end position="318"/>
    </location>
</feature>
<feature type="short sequence motif" description="IxM motif; signal for cargo packaging into COPII-coated vesicles" evidence="7">
    <location>
        <begin position="245"/>
        <end position="247"/>
    </location>
</feature>
<feature type="compositionally biased region" description="Polar residues" evidence="5">
    <location>
        <begin position="28"/>
        <end position="37"/>
    </location>
</feature>
<feature type="compositionally biased region" description="Pro residues" evidence="5">
    <location>
        <begin position="40"/>
        <end position="51"/>
    </location>
</feature>
<feature type="splice variant" id="VSP_020119" description="In isoform 2 and isoform 3." evidence="14 15 16 17">
    <location>
        <begin position="1"/>
        <end position="54"/>
    </location>
</feature>
<feature type="splice variant" id="VSP_020120" description="In isoform 3 and isoform 4." evidence="15">
    <original>RIDENVLGAQLDVEAAHSEILKYFQSVTSNRWLMVKIFLILIVFFIIFVVFLA</original>
    <variation>SVLLFPLLPALSPGSTRTC</variation>
    <location>
        <begin position="303"/>
        <end position="355"/>
    </location>
</feature>
<feature type="sequence variant" id="VAR_052248" description="In dbSNP:rs3802945.">
    <original>P</original>
    <variation>L</variation>
    <location>
        <position position="51"/>
    </location>
</feature>
<feature type="sequence variant" id="VAR_088766" description="In CDG2AA; the underlying nucleotide substitution affects the site of alternative translation initiation and results in complete loss of isoform 2." evidence="12">
    <original>M</original>
    <variation>V</variation>
    <location>
        <position position="55"/>
    </location>
</feature>
<feature type="sequence variant" id="VAR_052249" description="In dbSNP:rs11231241.">
    <original>Q</original>
    <variation>H</variation>
    <location>
        <position position="72"/>
    </location>
</feature>
<feature type="sequence variant" id="VAR_035642" description="In a breast cancer sample; somatic mutation." evidence="6">
    <original>Q</original>
    <variation>H</variation>
    <location>
        <position position="79"/>
    </location>
</feature>
<feature type="sequence variant" id="VAR_081529" description="Found in a patient with childhood apraxia of speech; uncertain significance; dbSNP:rs746774052." evidence="11">
    <original>I</original>
    <variation>V</variation>
    <location>
        <position position="138"/>
    </location>
</feature>
<feature type="mutagenesis site" description="Loss of interaction with SEC24C." evidence="7">
    <original>I</original>
    <variation>A</variation>
    <location>
        <position position="245"/>
    </location>
</feature>
<feature type="mutagenesis site" description="Loss of interaction with SEC24C." evidence="7">
    <original>M</original>
    <variation>A</variation>
    <location>
        <position position="247"/>
    </location>
</feature>
<feature type="strand" evidence="20">
    <location>
        <begin position="243"/>
        <end position="246"/>
    </location>
</feature>
<proteinExistence type="evidence at protein level"/>
<evidence type="ECO:0000250" key="1">
    <source>
        <dbReference type="UniProtKB" id="Q08851"/>
    </source>
</evidence>
<evidence type="ECO:0000250" key="2">
    <source>
        <dbReference type="UniProtKB" id="Q8K1E0"/>
    </source>
</evidence>
<evidence type="ECO:0000255" key="3"/>
<evidence type="ECO:0000255" key="4">
    <source>
        <dbReference type="PROSITE-ProRule" id="PRU00202"/>
    </source>
</evidence>
<evidence type="ECO:0000256" key="5">
    <source>
        <dbReference type="SAM" id="MobiDB-lite"/>
    </source>
</evidence>
<evidence type="ECO:0000269" key="6">
    <source>
    </source>
</evidence>
<evidence type="ECO:0000269" key="7">
    <source>
    </source>
</evidence>
<evidence type="ECO:0000269" key="8">
    <source>
    </source>
</evidence>
<evidence type="ECO:0000269" key="9">
    <source>
    </source>
</evidence>
<evidence type="ECO:0000269" key="10">
    <source>
    </source>
</evidence>
<evidence type="ECO:0000269" key="11">
    <source>
    </source>
</evidence>
<evidence type="ECO:0000269" key="12">
    <source>
    </source>
</evidence>
<evidence type="ECO:0000269" key="13">
    <source>
    </source>
</evidence>
<evidence type="ECO:0000303" key="14">
    <source>
    </source>
</evidence>
<evidence type="ECO:0000303" key="15">
    <source>
    </source>
</evidence>
<evidence type="ECO:0000303" key="16">
    <source>
    </source>
</evidence>
<evidence type="ECO:0000303" key="17">
    <source ref="4"/>
</evidence>
<evidence type="ECO:0000305" key="18"/>
<evidence type="ECO:0007744" key="19">
    <source>
        <dbReference type="PDB" id="3EFO"/>
    </source>
</evidence>
<evidence type="ECO:0007829" key="20">
    <source>
        <dbReference type="PDB" id="3EFO"/>
    </source>
</evidence>
<comment type="function">
    <text evidence="1">Mediates endoplasmic reticulum to Golgi transport. Together with p115/USO1 and GM130/GOLGA2, involved in vesicle tethering and fusion at the cis-Golgi membrane to maintain the stacked and inter-connected structure of the Golgi apparatus.</text>
</comment>
<comment type="function">
    <molecule>Isoform 2</molecule>
    <text evidence="12">Required for Golgi to endoplasmic reticulum retrogade transport, and for intra-Golgi transport.</text>
</comment>
<comment type="function">
    <text evidence="10">(Microbial infection) Required for the efficient production of infectious virion during human cytomegalovirus infection. Mechanistically, participates in the formation of the cytoplasmic viral assembly compartment where tegument acquisition and envelopment occur.</text>
</comment>
<comment type="subunit">
    <text evidence="1 2 7 8 9 12 13">Part of a ternary complex containing STX5A, NSFL1C and VCP (By similarity). Identified in a unique SNARE complex composed of the Golgi SNAREs GOSR1, GOSR2, YKT6 and VTI1A (By similarity). Component of a SNARE complex consisting of STX5, YKT6, GOSR1 and BET1L (By similarity). Interacts with BET1L (PubMed:34711829). Interacts with BET1 (PubMed:34779586). Interacts with COG4 (PubMed:19536132). Interacts with GM130/GOLGA2 (By similarity). Interacts (via IxM motif) with SEC24C and SEC24D; mediates STX5 packaging into COPII-coated vesicles (PubMed:18843296). Interacts with VLDLR; this interaction mediates VLDLR translocation from the endoplasmic reticulum to the plasma membrane (PubMed:23701949).</text>
</comment>
<comment type="interaction">
    <interactant intactId="EBI-714206">
        <id>Q13190</id>
    </interactant>
    <interactant intactId="EBI-5463075">
        <id>Q4LEZ3</id>
        <label>AARD</label>
    </interactant>
    <organismsDiffer>false</organismsDiffer>
    <experiments>3</experiments>
</comment>
<comment type="interaction">
    <interactant intactId="EBI-714206">
        <id>Q13190</id>
    </interactant>
    <interactant intactId="EBI-25646567">
        <id>Q06481-5</id>
        <label>APLP2</label>
    </interactant>
    <organismsDiffer>false</organismsDiffer>
    <experiments>3</experiments>
</comment>
<comment type="interaction">
    <interactant intactId="EBI-714206">
        <id>Q13190</id>
    </interactant>
    <interactant intactId="EBI-13059134">
        <id>Q13520</id>
        <label>AQP6</label>
    </interactant>
    <organismsDiffer>false</organismsDiffer>
    <experiments>3</experiments>
</comment>
<comment type="interaction">
    <interactant intactId="EBI-714206">
        <id>Q13190</id>
    </interactant>
    <interactant intactId="EBI-368382">
        <id>Q9H9E3</id>
        <label>COG4</label>
    </interactant>
    <organismsDiffer>false</organismsDiffer>
    <experiments>2</experiments>
</comment>
<comment type="interaction">
    <interactant intactId="EBI-714206">
        <id>Q13190</id>
    </interactant>
    <interactant intactId="EBI-17233035">
        <id>Q9BUF7-2</id>
        <label>CRB3</label>
    </interactant>
    <organismsDiffer>false</organismsDiffer>
    <experiments>3</experiments>
</comment>
<comment type="interaction">
    <interactant intactId="EBI-714206">
        <id>Q13190</id>
    </interactant>
    <interactant intactId="EBI-852194">
        <id>Q68CJ9</id>
        <label>CREB3L3</label>
    </interactant>
    <organismsDiffer>false</organismsDiffer>
    <experiments>3</experiments>
</comment>
<comment type="interaction">
    <interactant intactId="EBI-714206">
        <id>Q13190</id>
    </interactant>
    <interactant intactId="EBI-11974185">
        <id>Q494R4-2</id>
        <label>DRC12</label>
    </interactant>
    <organismsDiffer>false</organismsDiffer>
    <experiments>3</experiments>
</comment>
<comment type="interaction">
    <interactant intactId="EBI-714206">
        <id>Q13190</id>
    </interactant>
    <interactant intactId="EBI-3915253">
        <id>Q15125</id>
        <label>EBP</label>
    </interactant>
    <organismsDiffer>false</organismsDiffer>
    <experiments>3</experiments>
</comment>
<comment type="interaction">
    <interactant intactId="EBI-714206">
        <id>Q13190</id>
    </interactant>
    <interactant intactId="EBI-18304435">
        <id>Q5JX71</id>
        <label>FAM209A</label>
    </interactant>
    <organismsDiffer>false</organismsDiffer>
    <experiments>3</experiments>
</comment>
<comment type="interaction">
    <interactant intactId="EBI-714206">
        <id>Q13190</id>
    </interactant>
    <interactant intactId="EBI-4401517">
        <id>O14653</id>
        <label>GOSR2</label>
    </interactant>
    <organismsDiffer>false</organismsDiffer>
    <experiments>5</experiments>
</comment>
<comment type="interaction">
    <interactant intactId="EBI-714206">
        <id>Q13190</id>
    </interactant>
    <interactant intactId="EBI-751540">
        <id>O95872</id>
        <label>GPANK1</label>
    </interactant>
    <organismsDiffer>false</organismsDiffer>
    <experiments>3</experiments>
</comment>
<comment type="interaction">
    <interactant intactId="EBI-714206">
        <id>Q13190</id>
    </interactant>
    <interactant intactId="EBI-13345167">
        <id>Q8TDT2</id>
        <label>GPR152</label>
    </interactant>
    <organismsDiffer>false</organismsDiffer>
    <experiments>3</experiments>
</comment>
<comment type="interaction">
    <interactant intactId="EBI-714206">
        <id>Q13190</id>
    </interactant>
    <interactant intactId="EBI-1052304">
        <id>Q8NBQ5</id>
        <label>HSD17B11</label>
    </interactant>
    <organismsDiffer>false</organismsDiffer>
    <experiments>3</experiments>
</comment>
<comment type="interaction">
    <interactant intactId="EBI-714206">
        <id>Q13190</id>
    </interactant>
    <interactant intactId="EBI-18053395">
        <id>Q7Z5P4</id>
        <label>HSD17B13</label>
    </interactant>
    <organismsDiffer>false</organismsDiffer>
    <experiments>3</experiments>
</comment>
<comment type="interaction">
    <interactant intactId="EBI-714206">
        <id>Q13190</id>
    </interactant>
    <interactant intactId="EBI-10266796">
        <id>Q8N5M9</id>
        <label>JAGN1</label>
    </interactant>
    <organismsDiffer>false</organismsDiffer>
    <experiments>3</experiments>
</comment>
<comment type="interaction">
    <interactant intactId="EBI-714206">
        <id>Q13190</id>
    </interactant>
    <interactant intactId="EBI-749265">
        <id>Q8N6L0</id>
        <label>KASH5</label>
    </interactant>
    <organismsDiffer>false</organismsDiffer>
    <experiments>6</experiments>
</comment>
<comment type="interaction">
    <interactant intactId="EBI-714206">
        <id>Q13190</id>
    </interactant>
    <interactant intactId="EBI-3925442">
        <id>Q9HCJ2</id>
        <label>LRRC4C</label>
    </interactant>
    <organismsDiffer>false</organismsDiffer>
    <experiments>3</experiments>
</comment>
<comment type="interaction">
    <interactant intactId="EBI-714206">
        <id>Q13190</id>
    </interactant>
    <interactant intactId="EBI-1045155">
        <id>P43360</id>
        <label>MAGEA6</label>
    </interactant>
    <organismsDiffer>false</organismsDiffer>
    <experiments>3</experiments>
</comment>
<comment type="interaction">
    <interactant intactId="EBI-714206">
        <id>Q13190</id>
    </interactant>
    <interactant intactId="EBI-18051665">
        <id>Q9ULD2-3</id>
        <label>MTUS1</label>
    </interactant>
    <organismsDiffer>false</organismsDiffer>
    <experiments>3</experiments>
</comment>
<comment type="interaction">
    <interactant intactId="EBI-714206">
        <id>Q13190</id>
    </interactant>
    <interactant intactId="EBI-749652">
        <id>P54920</id>
        <label>NAPA</label>
    </interactant>
    <organismsDiffer>false</organismsDiffer>
    <experiments>5</experiments>
</comment>
<comment type="interaction">
    <interactant intactId="EBI-714206">
        <id>Q13190</id>
    </interactant>
    <interactant intactId="EBI-3921185">
        <id>Q9H115</id>
        <label>NAPB</label>
    </interactant>
    <organismsDiffer>false</organismsDiffer>
    <experiments>9</experiments>
</comment>
<comment type="interaction">
    <interactant intactId="EBI-714206">
        <id>Q13190</id>
    </interactant>
    <interactant intactId="EBI-7545592">
        <id>Q9H6H4</id>
        <label>REEP4</label>
    </interactant>
    <organismsDiffer>false</organismsDiffer>
    <experiments>3</experiments>
</comment>
<comment type="interaction">
    <interactant intactId="EBI-714206">
        <id>Q13190</id>
    </interactant>
    <interactant intactId="EBI-10192441">
        <id>Q86VR2</id>
        <label>RETREG3</label>
    </interactant>
    <organismsDiffer>false</organismsDiffer>
    <experiments>3</experiments>
</comment>
<comment type="interaction">
    <interactant intactId="EBI-714206">
        <id>Q13190</id>
    </interactant>
    <interactant intactId="EBI-1058865">
        <id>O75396</id>
        <label>SEC22B</label>
    </interactant>
    <organismsDiffer>false</organismsDiffer>
    <experiments>4</experiments>
</comment>
<comment type="interaction">
    <interactant intactId="EBI-714206">
        <id>Q13190</id>
    </interactant>
    <interactant intactId="EBI-2800345">
        <id>Q86WV6</id>
        <label>STING1</label>
    </interactant>
    <organismsDiffer>false</organismsDiffer>
    <experiments>3</experiments>
</comment>
<comment type="interaction">
    <interactant intactId="EBI-714206">
        <id>Q13190</id>
    </interactant>
    <interactant intactId="EBI-712466">
        <id>Q16623</id>
        <label>STX1A</label>
    </interactant>
    <organismsDiffer>false</organismsDiffer>
    <experiments>3</experiments>
</comment>
<comment type="interaction">
    <interactant intactId="EBI-714206">
        <id>Q13190</id>
    </interactant>
    <interactant intactId="EBI-11956649">
        <id>P32856-2</id>
        <label>STX2</label>
    </interactant>
    <organismsDiffer>false</organismsDiffer>
    <experiments>3</experiments>
</comment>
<comment type="interaction">
    <interactant intactId="EBI-714206">
        <id>Q13190</id>
    </interactant>
    <interactant intactId="EBI-1394295">
        <id>Q13277</id>
        <label>STX3</label>
    </interactant>
    <organismsDiffer>false</organismsDiffer>
    <experiments>5</experiments>
</comment>
<comment type="interaction">
    <interactant intactId="EBI-714206">
        <id>Q13190</id>
    </interactant>
    <interactant intactId="EBI-744942">
        <id>Q12846</id>
        <label>STX4</label>
    </interactant>
    <organismsDiffer>false</organismsDiffer>
    <experiments>6</experiments>
</comment>
<comment type="interaction">
    <interactant intactId="EBI-714206">
        <id>Q13190</id>
    </interactant>
    <interactant intactId="EBI-727240">
        <id>Q9UNK0</id>
        <label>STX8</label>
    </interactant>
    <organismsDiffer>false</organismsDiffer>
    <experiments>6</experiments>
</comment>
<comment type="interaction">
    <interactant intactId="EBI-714206">
        <id>Q13190</id>
    </interactant>
    <interactant intactId="EBI-960169">
        <id>P61764</id>
        <label>STXBP1</label>
    </interactant>
    <organismsDiffer>false</organismsDiffer>
    <experiments>6</experiments>
</comment>
<comment type="interaction">
    <interactant intactId="EBI-714206">
        <id>Q13190</id>
    </interactant>
    <interactant intactId="EBI-624237">
        <id>O75410</id>
        <label>TACC1</label>
    </interactant>
    <organismsDiffer>false</organismsDiffer>
    <experiments>3</experiments>
</comment>
<comment type="interaction">
    <interactant intactId="EBI-714206">
        <id>Q13190</id>
    </interactant>
    <interactant intactId="EBI-10191195">
        <id>O95183</id>
        <label>VAMP5</label>
    </interactant>
    <organismsDiffer>false</organismsDiffer>
    <experiments>6</experiments>
</comment>
<comment type="interaction">
    <interactant intactId="EBI-25938350">
        <id>Q13190-4</id>
    </interactant>
    <interactant intactId="EBI-77613">
        <id>P05067</id>
        <label>APP</label>
    </interactant>
    <organismsDiffer>false</organismsDiffer>
    <experiments>3</experiments>
</comment>
<comment type="subcellular location">
    <subcellularLocation>
        <location evidence="1">Endoplasmic reticulum-Golgi intermediate compartment membrane</location>
        <topology evidence="3">Single-pass type IV membrane protein</topology>
    </subcellularLocation>
    <subcellularLocation>
        <location evidence="10">Golgi apparatus membrane</location>
    </subcellularLocation>
    <text evidence="10">Localizes throughout the Golgi apparatus, but most abundant in the cis-most cisternae.</text>
</comment>
<comment type="alternative products">
    <event type="alternative splicing"/>
    <event type="alternative initiation"/>
    <isoform>
        <id>Q13190-1</id>
        <name>1</name>
        <sequence type="displayed"/>
    </isoform>
    <isoform>
        <id>Q13190-2</id>
        <name>2</name>
        <sequence type="described" ref="VSP_020119"/>
    </isoform>
    <isoform>
        <id>Q13190-3</id>
        <name>3</name>
        <sequence type="described" ref="VSP_020119 VSP_020120"/>
    </isoform>
    <isoform>
        <id>Q13190-4</id>
        <name>4</name>
        <sequence type="described" ref="VSP_020120"/>
    </isoform>
</comment>
<comment type="induction">
    <text evidence="10">(Microbial infection) By human cytomegalovirus infection.</text>
</comment>
<comment type="disease" evidence="12">
    <disease id="DI-06728">
        <name>Congenital disorder of glycosylation 2AA</name>
        <acronym>CDG2AA</acronym>
        <description>A form of congenital disorder of glycosylation, a genetically heterogeneous group of multisystem disorders caused by a defect in glycoprotein biosynthesis and characterized by under-glycosylated serum glycoproteins. Congenital disorders of glycosylation result in a wide variety of clinical features, such as defects in the nervous system development, psychomotor retardation, dysmorphic features, hypotonia, coagulation disorders, and immunodeficiency. The broad spectrum of features reflects the critical role of N-glycoproteins during embryonic development, differentiation, and maintenance of cell functions. CDG2AA is an autosomal recessive, early fatal form characterized by severe liver disease, skeletal abnormalities, and protein glycosylation defects.</description>
        <dbReference type="MIM" id="620454"/>
    </disease>
    <text evidence="12">The disease may be caused by variants affecting the gene represented in this entry. A likely pathogenic nucleotide substitution affecting the translation initiation codon of isoform 2 has been found in a CDG2AA family, and fully abrogates isoform 2 production. Loss of isoform 2 results in altered morphology of the endoplasmic reticulum and Golgi apparatus, compromised intra-Golgi trafficking, mislocalization of glycosyltransferases, and protein glycosylation defects.</text>
</comment>
<comment type="miscellaneous">
    <molecule>Isoform 2</molecule>
    <text evidence="18">Produced by alternative initiation at Met-55 of isoform 1.</text>
</comment>
<comment type="miscellaneous">
    <molecule>Isoform 3</molecule>
    <text evidence="18">Produced by alternative splicing and alternative initiation.</text>
</comment>
<comment type="similarity">
    <text evidence="18">Belongs to the syntaxin family.</text>
</comment>
<protein>
    <recommendedName>
        <fullName>Syntaxin-5</fullName>
    </recommendedName>
</protein>